<sequence>MNAAAKAGKLARAPADLGKGGVPGDAAPGAPGAAPLAKEIPEVLMDPRSRRQYVRGRFLGKGGFAKCFEISDSDTKEVFPGKIVPKSLLLKPHQKEKMSMEISIHRSLAHQHVVGFHGFFEDSDFVFVVLELCRRRSLLELHKRRKALTEPEARYYLRQIVLGCQYLHRNQVIHRDLKLGNLFLNEDLEVKIGDFGLATKVEYEGERKKTLCGTPNYIAPEVLSKKGHSFEVDVWSIGCIMYTLLVGKPPFETSCLKETYLRIKKNEYSIPKHINPVAASLIQKMLQTDPTARPTIHELLNDEFFTSGYIPARLPITCLTIPPRFSIAPSSLDPSNRKPLTVLNKGVENPLPDRPREKEEPVVRETNEAIECHLSDLLQQLTSVNASKPSERGLVRQEEAEDPACIPIFWVSKWVDYSDKYGLGYQLCDNSVGVLFNDSTRLILYNDGDSLQYIERDGTESYLTVSSHPNSLMKKITLLNYFRNYMSEHLLKAGANITPREGDELARLPYLRTWFRTRSAIILHLSNGTVQINFFQDHTKLILCPLMAAVTYINEKRDFRTYRLSLLEEYGCCKELASRLRYARTMVDKLLSSRSACNRLKAS</sequence>
<comment type="function">
    <text evidence="3 4">Serine/threonine-protein kinase that performs several important functions throughout M phase of the cell cycle, including the regulation of centrosome maturation and spindle assembly, the removal of cohesins from chromosome arms, the inactivation of anaphase-promoting complex/cyclosome (APC/C) inhibitors, and the regulation of mitotic exit and cytokinesis. Polo-like kinase proteins act by binding and phosphorylating proteins that are already phosphorylated on a specific motif recognized by the POLO box domains. Phosphorylates BORA, BUB1B/BUBR1, CCNB1, CDC25C, CEP55, ECT2, ERCC6L, FBXO5/EMI1, FOXM1, KIF20A/MKLP2, CENPU, NEDD1, NINL, NPM1, NUDC, PKMYT1/MYT1, KIZ, PPP1R12A/MYPT1, PRC1, RACGAP1/CYK4, RHNO1, SGO1, STAG2/SA2, TEX14, TOPORS, p73/TP73, TPT1, WEE1 and HNRNPU. Plays a key role in centrosome functions and the assembly of bipolar spindles by phosphorylating KIZ, NEDD1 and NINL. NEDD1 phosphorylation promotes subsequent targeting of the gamma-tubulin ring complex (gTuRC) to the centrosome, an important step for spindle formation. Phosphorylation of NINL component of the centrosome leads to NINL dissociation from other centrosomal proteins. Involved in mitosis exit and cytokinesis by phosphorylating CEP55, ECT2, KIF20A/MKLP2, CENPU, PRC1 and RACGAP1. Recruited at the central spindle by phosphorylating and docking PRC1 and KIF20A/MKLP2; creates its own docking sites on PRC1 and KIF20A/MKLP2 by mediating phosphorylation of sites subsequently recognized by the POLO box domains. Phosphorylates RACGAP1, thereby creating a docking site for the Rho GTP exchange factor ECT2 that is essential for the cleavage furrow formation. Promotes the central spindle recruitment of ECT2. Plays a central role in G2/M transition of mitotic cell cycle by phosphorylating CCNB1, CDC25C, FOXM1, CENPU, PKMYT1/MYT1, PPP1R12A/MYPT1 and WEE1. Part of a regulatory circuit that promotes the activation of CDK1 by phosphorylating the positive regulator CDC25C and inhibiting the negative regulators WEE1 and PKMYT1/MYT1. Also acts by mediating phosphorylation of cyclin-B1 (CCNB1) on centrosomes in prophase. Phosphorylates FOXM1, a key mitotic transcription regulator, leading to enhance FOXM1 transcriptional activity. Involved in kinetochore functions and sister chromatid cohesion by phosphorylating BUB1B/BUBR1, FBXO5/EMI1 and STAG2/SA2. PLK1 is high on non-attached kinetochores suggesting a role of PLK1 in kinetochore attachment or in spindle assembly checkpoint (SAC) regulation. Required for kinetochore localization of BUB1B. Regulates the dissociation of cohesin from chromosomes by phosphorylating cohesin subunits such as STAG2/SA2. Phosphorylates SGO1: required for spindle pole localization of isoform 3 of SGO1 and plays a role in regulating its centriole cohesion function. Mediates phosphorylation of FBXO5/EMI1, a negative regulator of the APC/C complex during prophase, leading to FBXO5/EMI1 ubiquitination and degradation by the proteasome. Acts as a negative regulator of p53 family members: phosphorylates TOPORS, leading to inhibit the sumoylation of p53/TP53 and simultaneously enhance the ubiquitination and subsequent degradation of p53/TP53. Phosphorylates the transactivation domain of the transcription factor p73/TP73, leading to inhibit p73/TP73-mediated transcriptional activation and pro-apoptotic functions. Phosphorylates BORA, and thereby promotes the degradation of BORA. Contributes to the regulation of AURKA function. Also required for recovery after DNA damage checkpoint and entry into mitosis. Phosphorylates MISP, leading to stabilization of cortical and astral microtubule attachments required for proper spindle positioning. Together with MEIKIN, acts as a regulator of kinetochore function during meiosis I: required both for mono-orientation of kinetochores on sister chromosomes and protection of centromeric cohesin from separase-mediated cleavage. Phosphorylates CEP68 and is required for its degradation. Regulates nuclear envelope breakdown during prophase by phosphorylating DCTN1 resulting in its localization in the nuclear envelope. Phosphorylates the heat shock transcription factor HSF1, promoting HSF1 nuclear translocation upon heat shock. Phosphorylates HSF1 also in the early mitotic period; this phosphorylation regulates HSF1 localization to the spindle pole, the recruitment of the SCF(BTRC) ubiquitin ligase complex induicing HSF1 degradation, and hence mitotic progression. Regulates mitotic progression by phosphorylating RIOK2. Through the phosphorylation of DZIP1 regulates the localization during mitosis of the BBSome, a ciliary protein complex involved in cilium biogenesis. Regulates DNA repair during mitosis by mediating phosphorylation of POLQ and RHNO1, thereby promoting POLQ recruitment to DNA damage sites (By similarity). Phosphorylates ATXN10 which may play a role in the regulation of cytokinesis and may stimulate the proteasome-mediated degradation of ATXN10 (By similarity).</text>
</comment>
<comment type="catalytic activity">
    <reaction evidence="3">
        <text>L-seryl-[protein] + ATP = O-phospho-L-seryl-[protein] + ADP + H(+)</text>
        <dbReference type="Rhea" id="RHEA:17989"/>
        <dbReference type="Rhea" id="RHEA-COMP:9863"/>
        <dbReference type="Rhea" id="RHEA-COMP:11604"/>
        <dbReference type="ChEBI" id="CHEBI:15378"/>
        <dbReference type="ChEBI" id="CHEBI:29999"/>
        <dbReference type="ChEBI" id="CHEBI:30616"/>
        <dbReference type="ChEBI" id="CHEBI:83421"/>
        <dbReference type="ChEBI" id="CHEBI:456216"/>
        <dbReference type="EC" id="2.7.11.21"/>
    </reaction>
</comment>
<comment type="catalytic activity">
    <reaction evidence="3">
        <text>L-threonyl-[protein] + ATP = O-phospho-L-threonyl-[protein] + ADP + H(+)</text>
        <dbReference type="Rhea" id="RHEA:46608"/>
        <dbReference type="Rhea" id="RHEA-COMP:11060"/>
        <dbReference type="Rhea" id="RHEA-COMP:11605"/>
        <dbReference type="ChEBI" id="CHEBI:15378"/>
        <dbReference type="ChEBI" id="CHEBI:30013"/>
        <dbReference type="ChEBI" id="CHEBI:30616"/>
        <dbReference type="ChEBI" id="CHEBI:61977"/>
        <dbReference type="ChEBI" id="CHEBI:456216"/>
        <dbReference type="EC" id="2.7.11.21"/>
    </reaction>
</comment>
<comment type="activity regulation">
    <text evidence="3">Activated by phosphorylation of Thr-210 by AURKA; phosphorylation by AURKA is enhanced by BORA. Once activated, activity is stimulated by binding target proteins. Binding of target proteins has no effect on the non-activated kinase. Several inhibitors targeting PLKs are currently in development and are under investigation in a growing number of clinical trials, such as BI 2536, an ATP-competitive PLK1 inhibitor or BI 6727, a dihydropteridinone that specifically inhibits the catalytic activity of PLK1 (By similarity).</text>
</comment>
<comment type="subunit">
    <text evidence="2 3 4">Interacts with CEP170 and EVI5. Interacts and phosphorylates ERCC6L. Interacts with FAM29A. Interacts with SLX4/BTBD12 and TTDN1. Interacts with BUB1B. Interacts (via POLO-box domain) with the phosphorylated form of BUB1, CENPU and CDC25C. Interacts with isoform 3 of SGO1. Interacts with BORA, KIF2A and AURKA. Interacts with TOPORS and CYLD. Interacts with ECT2; the interaction is stimulated upon phosphorylation of ECT2 on 'Thr-444'. Interacts with PRC1. Interacts with KIF20A/MKLP2 (when phosphorylated), leading to the recruitment at the central spindle. Interacts (via POLO box domains) with PPP1R12A/MYPT1 (when previously phosphorylated by CDK1). Part of an astrin (SPAG5)-kinastrin (SKAP) complex containing KNSTRN, SPAG5, PLK1, DYNLL1 and SGO2. Interacts with BIRC6/bruce. Interacts with CDK1-phosphorylated FRY; this interaction occurs in mitotic cells, but not in interphase cells. FRY interaction facilitates AURKA-mediated PLK1 phosphorylation. Interacts with CDK1-phosphorylated DCTN6 during mitotic prometaphase; the interaction facilitates recruitment to kinetochores. Interacts with CEP68; the interaction phosphorylates CEP68. Interacts (via POLO-box domain) with DCTN1. Interacts with CEP20 in later G1, S, G2 and M phases of the cell cycle; this interaction recruits PLK1 to centrosomes, a step required for S phase progression. Interacts with HSF1; this interaction increases upon heat shock but does not modulate neither HSF1 homotrimerization nor DNA-binding activities. Interacts with HNRNPU; this interaction induces phosphorylation of HNRNPU in mitosis. Interacts (via its N-terminus) with RIOK2 (By similarity). Interacts with KLHL22 (By similarity). Interacts (via POLO box domains) with NEDD9/HEF1 (via C-terminus) (By similarity). Interacts (via RVxF motif) with FIRRM; regulates PLK1 kinase activity (By similarity). Interacts with SKA3; the interaction promotes the stability of PLK1 (By similarity). Interacts with the MTMR3:MTMR4 heterooligomer; brings CEP55 and PLK1 together during early mitosis, regulating the phosphorylation of CEP55 by PLK1 and its recruitment to the midbody where it can mediate cell abscission (By similarity).</text>
</comment>
<comment type="subcellular location">
    <subcellularLocation>
        <location evidence="3">Nucleus</location>
    </subcellularLocation>
    <subcellularLocation>
        <location evidence="3">Chromosome</location>
        <location evidence="3">Centromere</location>
        <location evidence="3">Kinetochore</location>
    </subcellularLocation>
    <subcellularLocation>
        <location evidence="3">Cytoplasm</location>
        <location evidence="3">Cytoskeleton</location>
        <location evidence="3">Microtubule organizing center</location>
        <location evidence="3">Centrosome</location>
    </subcellularLocation>
    <subcellularLocation>
        <location evidence="3">Cytoplasm</location>
        <location evidence="3">Cytoskeleton</location>
        <location evidence="3">Spindle</location>
    </subcellularLocation>
    <subcellularLocation>
        <location evidence="3">Midbody</location>
    </subcellularLocation>
    <text evidence="3">localization at the centrosome starts at the G1/S transition (By similarity). During early stages of mitosis, the phosphorylated form is detected on centrosomes and kinetochores. Localizes to the outer kinetochore. Presence of SGO1 and interaction with the phosphorylated form of BUB1 is required for the kinetochore localization. Localizes onto the central spindle by phosphorylating and docking at midzone proteins KIF20A/MKLP2 and PRC1 (By similarity). Colocalizes with FRY to separating centrosomes and spindle poles from prophase to metaphase in mitosis, but not in other stages of the cell cycle (By similarity). Localization to the centrosome is required for S phase progression (By similarity). Colocalizes with HSF1 at the spindle poles during prometaphase (By similarity).</text>
</comment>
<comment type="domain">
    <text evidence="3">The POLO box domains act as phosphopeptide-binding module that recognizes and binds serine-[phosphothreonine/phosphoserine]-(proline/X) motifs. PLK1 recognizes and binds docking proteins that are already phosphorylated on these motifs, and then phosphorylates them. PLK1 can also create its own docking sites by mediating phosphorylation of serine-[phosphothreonine/phosphoserine]-(proline/X) motifs subsequently recognized by the POLO box domains (By similarity).</text>
</comment>
<comment type="PTM">
    <text evidence="3">Catalytic activity is enhanced by phosphorylation of Thr-210. Phosphorylation at Thr-210 is first detected on centrosomes in the G2 phase of the cell cycle, peaks in prometaphase and gradually disappears from centrosomes during anaphase. Dephosphorylation at Thr-210 at centrosomes is probably mediated by protein phosphatase 1C (PP1C), via interaction with PPP1R12A/MYPT1. Autophosphorylation and phosphorylation of Ser-137 may not be significant for the activation of PLK1 during mitosis, but may enhance catalytic activity during recovery after DNA damage checkpoint. Phosphorylated in vitro by STK10 (By similarity).</text>
</comment>
<comment type="PTM">
    <text evidence="3">Ubiquitinated by the anaphase promoting complex/cyclosome (APC/C) in anaphase and following DNA damage, leading to its degradation by the proteasome. Ubiquitination is mediated via its interaction with FZR1/CDH1. Ubiquitination and subsequent degradation prevents entry into mitosis and is essential to maintain an efficient G2 DNA damage checkpoint. Monoubiquitination at Lys-492 by the BCR(KLHL22) ubiquitin ligase complex does not lead to degradation: it promotes PLK1 dissociation from phosphoreceptor proteins and subsequent removal from kinetochores, allowing silencing of the spindle assembly checkpoint (SAC) and chromosome segregation (By similarity).</text>
</comment>
<comment type="similarity">
    <text evidence="6">Belongs to the protein kinase superfamily. Ser/Thr protein kinase family. CDC5/Polo subfamily.</text>
</comment>
<reference key="1">
    <citation type="submission" date="1994-05" db="EMBL/GenBank/DDBJ databases">
        <authorList>
            <person name="Amstrup J."/>
            <person name="Hansen J.A."/>
            <person name="Hxirlis Nielsen J."/>
        </authorList>
    </citation>
    <scope>NUCLEOTIDE SEQUENCE [MRNA]</scope>
    <source>
        <tissue>Pancreas</tissue>
    </source>
</reference>
<reference key="2">
    <citation type="journal article" date="2004" name="Genome Res.">
        <title>The status, quality, and expansion of the NIH full-length cDNA project: the Mammalian Gene Collection (MGC).</title>
        <authorList>
            <consortium name="The MGC Project Team"/>
        </authorList>
    </citation>
    <scope>NUCLEOTIDE SEQUENCE [LARGE SCALE MRNA]</scope>
    <source>
        <tissue>Testis</tissue>
    </source>
</reference>
<evidence type="ECO:0000250" key="1"/>
<evidence type="ECO:0000250" key="2">
    <source>
        <dbReference type="UniProtKB" id="P36873"/>
    </source>
</evidence>
<evidence type="ECO:0000250" key="3">
    <source>
        <dbReference type="UniProtKB" id="P53350"/>
    </source>
</evidence>
<evidence type="ECO:0000250" key="4">
    <source>
        <dbReference type="UniProtKB" id="Q07832"/>
    </source>
</evidence>
<evidence type="ECO:0000255" key="5">
    <source>
        <dbReference type="PROSITE-ProRule" id="PRU00154"/>
    </source>
</evidence>
<evidence type="ECO:0000255" key="6">
    <source>
        <dbReference type="PROSITE-ProRule" id="PRU00159"/>
    </source>
</evidence>
<evidence type="ECO:0000255" key="7">
    <source>
        <dbReference type="PROSITE-ProRule" id="PRU10027"/>
    </source>
</evidence>
<evidence type="ECO:0000256" key="8">
    <source>
        <dbReference type="SAM" id="MobiDB-lite"/>
    </source>
</evidence>
<evidence type="ECO:0000305" key="9"/>
<keyword id="KW-0067">ATP-binding</keyword>
<keyword id="KW-0131">Cell cycle</keyword>
<keyword id="KW-0132">Cell division</keyword>
<keyword id="KW-0137">Centromere</keyword>
<keyword id="KW-0158">Chromosome</keyword>
<keyword id="KW-0963">Cytoplasm</keyword>
<keyword id="KW-0206">Cytoskeleton</keyword>
<keyword id="KW-1017">Isopeptide bond</keyword>
<keyword id="KW-0418">Kinase</keyword>
<keyword id="KW-0995">Kinetochore</keyword>
<keyword id="KW-0498">Mitosis</keyword>
<keyword id="KW-0547">Nucleotide-binding</keyword>
<keyword id="KW-0539">Nucleus</keyword>
<keyword id="KW-0597">Phosphoprotein</keyword>
<keyword id="KW-1185">Reference proteome</keyword>
<keyword id="KW-0677">Repeat</keyword>
<keyword id="KW-0723">Serine/threonine-protein kinase</keyword>
<keyword id="KW-0808">Transferase</keyword>
<keyword id="KW-0832">Ubl conjugation</keyword>
<gene>
    <name type="primary">Plk1</name>
    <name type="synonym">Plk</name>
</gene>
<accession>Q62673</accession>
<accession>F1LNH6</accession>
<accession>Q5XHX4</accession>
<dbReference type="EC" id="2.7.11.21" evidence="3"/>
<dbReference type="EMBL" id="U10188">
    <property type="protein sequence ID" value="AAA18885.1"/>
    <property type="molecule type" value="mRNA"/>
</dbReference>
<dbReference type="EMBL" id="BC083926">
    <property type="protein sequence ID" value="AAH83926.1"/>
    <property type="molecule type" value="mRNA"/>
</dbReference>
<dbReference type="RefSeq" id="NP_058796.1">
    <property type="nucleotide sequence ID" value="NM_017100.1"/>
</dbReference>
<dbReference type="SMR" id="Q62673"/>
<dbReference type="FunCoup" id="Q62673">
    <property type="interactions" value="1004"/>
</dbReference>
<dbReference type="STRING" id="10116.ENSRNOP00000025629"/>
<dbReference type="iPTMnet" id="Q62673"/>
<dbReference type="PhosphoSitePlus" id="Q62673"/>
<dbReference type="PaxDb" id="10116-ENSRNOP00000025629"/>
<dbReference type="GeneID" id="25515"/>
<dbReference type="KEGG" id="rno:25515"/>
<dbReference type="UCSC" id="RGD:3352">
    <property type="organism name" value="rat"/>
</dbReference>
<dbReference type="AGR" id="RGD:3352"/>
<dbReference type="CTD" id="5347"/>
<dbReference type="RGD" id="3352">
    <property type="gene designation" value="Plk1"/>
</dbReference>
<dbReference type="eggNOG" id="KOG0575">
    <property type="taxonomic scope" value="Eukaryota"/>
</dbReference>
<dbReference type="InParanoid" id="Q62673"/>
<dbReference type="BRENDA" id="2.7.11.21">
    <property type="organism ID" value="5301"/>
</dbReference>
<dbReference type="Reactome" id="R-RNO-141444">
    <property type="pathway name" value="Amplification of signal from unattached kinetochores via a MAD2 inhibitory signal"/>
</dbReference>
<dbReference type="Reactome" id="R-RNO-156711">
    <property type="pathway name" value="Polo-like kinase mediated events"/>
</dbReference>
<dbReference type="Reactome" id="R-RNO-162658">
    <property type="pathway name" value="Golgi Cisternae Pericentriolar Stack Reorganization"/>
</dbReference>
<dbReference type="Reactome" id="R-RNO-174178">
    <property type="pathway name" value="APC/C:Cdh1 mediated degradation of Cdc20 and other APC/C:Cdh1 targeted proteins in late mitosis/early G1"/>
</dbReference>
<dbReference type="Reactome" id="R-RNO-176412">
    <property type="pathway name" value="Phosphorylation of the APC/C"/>
</dbReference>
<dbReference type="Reactome" id="R-RNO-176417">
    <property type="pathway name" value="Phosphorylation of Emi1"/>
</dbReference>
<dbReference type="Reactome" id="R-RNO-2299718">
    <property type="pathway name" value="Condensation of Prophase Chromosomes"/>
</dbReference>
<dbReference type="Reactome" id="R-RNO-2467813">
    <property type="pathway name" value="Separation of Sister Chromatids"/>
</dbReference>
<dbReference type="Reactome" id="R-RNO-2500257">
    <property type="pathway name" value="Resolution of Sister Chromatid Cohesion"/>
</dbReference>
<dbReference type="Reactome" id="R-RNO-2565942">
    <property type="pathway name" value="Regulation of PLK1 Activity at G2/M Transition"/>
</dbReference>
<dbReference type="Reactome" id="R-RNO-2980767">
    <property type="pathway name" value="Activation of NIMA Kinases NEK9, NEK6, NEK7"/>
</dbReference>
<dbReference type="Reactome" id="R-RNO-380259">
    <property type="pathway name" value="Loss of Nlp from mitotic centrosomes"/>
</dbReference>
<dbReference type="Reactome" id="R-RNO-380270">
    <property type="pathway name" value="Recruitment of mitotic centrosome proteins and complexes"/>
</dbReference>
<dbReference type="Reactome" id="R-RNO-380284">
    <property type="pathway name" value="Loss of proteins required for interphase microtubule organization from the centrosome"/>
</dbReference>
<dbReference type="Reactome" id="R-RNO-380320">
    <property type="pathway name" value="Recruitment of NuMA to mitotic centrosomes"/>
</dbReference>
<dbReference type="Reactome" id="R-RNO-5620912">
    <property type="pathway name" value="Anchoring of the basal body to the plasma membrane"/>
</dbReference>
<dbReference type="Reactome" id="R-RNO-5663220">
    <property type="pathway name" value="RHO GTPases Activate Formins"/>
</dbReference>
<dbReference type="Reactome" id="R-RNO-68877">
    <property type="pathway name" value="Mitotic Prometaphase"/>
</dbReference>
<dbReference type="Reactome" id="R-RNO-68881">
    <property type="pathway name" value="Mitotic Metaphase/Anaphase Transition"/>
</dbReference>
<dbReference type="Reactome" id="R-RNO-68884">
    <property type="pathway name" value="Mitotic Telophase/Cytokinesis"/>
</dbReference>
<dbReference type="Reactome" id="R-RNO-69273">
    <property type="pathway name" value="Cyclin A/B1/B2 associated events during G2/M transition"/>
</dbReference>
<dbReference type="Reactome" id="R-RNO-8852276">
    <property type="pathway name" value="The role of GTSE1 in G2/M progression after G2 checkpoint"/>
</dbReference>
<dbReference type="Reactome" id="R-RNO-8854518">
    <property type="pathway name" value="AURKA Activation by TPX2"/>
</dbReference>
<dbReference type="Reactome" id="R-RNO-9648025">
    <property type="pathway name" value="EML4 and NUDC in mitotic spindle formation"/>
</dbReference>
<dbReference type="PRO" id="PR:Q62673"/>
<dbReference type="Proteomes" id="UP000002494">
    <property type="component" value="Unplaced"/>
</dbReference>
<dbReference type="GO" id="GO:0034451">
    <property type="term" value="C:centriolar satellite"/>
    <property type="evidence" value="ECO:0000266"/>
    <property type="project" value="RGD"/>
</dbReference>
<dbReference type="GO" id="GO:0005814">
    <property type="term" value="C:centriole"/>
    <property type="evidence" value="ECO:0000266"/>
    <property type="project" value="RGD"/>
</dbReference>
<dbReference type="GO" id="GO:0005813">
    <property type="term" value="C:centrosome"/>
    <property type="evidence" value="ECO:0000250"/>
    <property type="project" value="UniProtKB"/>
</dbReference>
<dbReference type="GO" id="GO:0000785">
    <property type="term" value="C:chromatin"/>
    <property type="evidence" value="ECO:0000266"/>
    <property type="project" value="RGD"/>
</dbReference>
<dbReference type="GO" id="GO:0000775">
    <property type="term" value="C:chromosome, centromeric region"/>
    <property type="evidence" value="ECO:0000266"/>
    <property type="project" value="RGD"/>
</dbReference>
<dbReference type="GO" id="GO:0000779">
    <property type="term" value="C:condensed chromosome, centromeric region"/>
    <property type="evidence" value="ECO:0000266"/>
    <property type="project" value="RGD"/>
</dbReference>
<dbReference type="GO" id="GO:0005737">
    <property type="term" value="C:cytoplasm"/>
    <property type="evidence" value="ECO:0000318"/>
    <property type="project" value="GO_Central"/>
</dbReference>
<dbReference type="GO" id="GO:0000776">
    <property type="term" value="C:kinetochore"/>
    <property type="evidence" value="ECO:0000250"/>
    <property type="project" value="UniProtKB"/>
</dbReference>
<dbReference type="GO" id="GO:0015630">
    <property type="term" value="C:microtubule cytoskeleton"/>
    <property type="evidence" value="ECO:0000266"/>
    <property type="project" value="RGD"/>
</dbReference>
<dbReference type="GO" id="GO:0030496">
    <property type="term" value="C:midbody"/>
    <property type="evidence" value="ECO:0000250"/>
    <property type="project" value="UniProtKB"/>
</dbReference>
<dbReference type="GO" id="GO:0097431">
    <property type="term" value="C:mitotic spindle pole"/>
    <property type="evidence" value="ECO:0000266"/>
    <property type="project" value="RGD"/>
</dbReference>
<dbReference type="GO" id="GO:0005634">
    <property type="term" value="C:nucleus"/>
    <property type="evidence" value="ECO:0000250"/>
    <property type="project" value="UniProtKB"/>
</dbReference>
<dbReference type="GO" id="GO:0000940">
    <property type="term" value="C:outer kinetochore"/>
    <property type="evidence" value="ECO:0000266"/>
    <property type="project" value="RGD"/>
</dbReference>
<dbReference type="GO" id="GO:0005819">
    <property type="term" value="C:spindle"/>
    <property type="evidence" value="ECO:0000250"/>
    <property type="project" value="UniProtKB"/>
</dbReference>
<dbReference type="GO" id="GO:0005876">
    <property type="term" value="C:spindle microtubule"/>
    <property type="evidence" value="ECO:0000266"/>
    <property type="project" value="RGD"/>
</dbReference>
<dbReference type="GO" id="GO:0051233">
    <property type="term" value="C:spindle midzone"/>
    <property type="evidence" value="ECO:0000314"/>
    <property type="project" value="RGD"/>
</dbReference>
<dbReference type="GO" id="GO:0000922">
    <property type="term" value="C:spindle pole"/>
    <property type="evidence" value="ECO:0000314"/>
    <property type="project" value="RGD"/>
</dbReference>
<dbReference type="GO" id="GO:0000795">
    <property type="term" value="C:synaptonemal complex"/>
    <property type="evidence" value="ECO:0000266"/>
    <property type="project" value="RGD"/>
</dbReference>
<dbReference type="GO" id="GO:0010997">
    <property type="term" value="F:anaphase-promoting complex binding"/>
    <property type="evidence" value="ECO:0000266"/>
    <property type="project" value="RGD"/>
</dbReference>
<dbReference type="GO" id="GO:0005524">
    <property type="term" value="F:ATP binding"/>
    <property type="evidence" value="ECO:0000266"/>
    <property type="project" value="RGD"/>
</dbReference>
<dbReference type="GO" id="GO:0042802">
    <property type="term" value="F:identical protein binding"/>
    <property type="evidence" value="ECO:0000266"/>
    <property type="project" value="RGD"/>
</dbReference>
<dbReference type="GO" id="GO:0000287">
    <property type="term" value="F:magnesium ion binding"/>
    <property type="evidence" value="ECO:0000266"/>
    <property type="project" value="RGD"/>
</dbReference>
<dbReference type="GO" id="GO:0008017">
    <property type="term" value="F:microtubule binding"/>
    <property type="evidence" value="ECO:0000250"/>
    <property type="project" value="UniProtKB"/>
</dbReference>
<dbReference type="GO" id="GO:0004672">
    <property type="term" value="F:protein kinase activity"/>
    <property type="evidence" value="ECO:0000266"/>
    <property type="project" value="RGD"/>
</dbReference>
<dbReference type="GO" id="GO:0019901">
    <property type="term" value="F:protein kinase binding"/>
    <property type="evidence" value="ECO:0000266"/>
    <property type="project" value="RGD"/>
</dbReference>
<dbReference type="GO" id="GO:0106310">
    <property type="term" value="F:protein serine kinase activity"/>
    <property type="evidence" value="ECO:0000266"/>
    <property type="project" value="RGD"/>
</dbReference>
<dbReference type="GO" id="GO:0004674">
    <property type="term" value="F:protein serine/threonine kinase activity"/>
    <property type="evidence" value="ECO:0000250"/>
    <property type="project" value="UniProtKB"/>
</dbReference>
<dbReference type="GO" id="GO:0007098">
    <property type="term" value="P:centrosome cycle"/>
    <property type="evidence" value="ECO:0000250"/>
    <property type="project" value="UniProtKB"/>
</dbReference>
<dbReference type="GO" id="GO:0006302">
    <property type="term" value="P:double-strand break repair"/>
    <property type="evidence" value="ECO:0000266"/>
    <property type="project" value="RGD"/>
</dbReference>
<dbReference type="GO" id="GO:0097681">
    <property type="term" value="P:double-strand break repair via alternative nonhomologous end joining"/>
    <property type="evidence" value="ECO:0000266"/>
    <property type="project" value="RGD"/>
</dbReference>
<dbReference type="GO" id="GO:0000132">
    <property type="term" value="P:establishment of mitotic spindle orientation"/>
    <property type="evidence" value="ECO:0000266"/>
    <property type="project" value="RGD"/>
</dbReference>
<dbReference type="GO" id="GO:0045184">
    <property type="term" value="P:establishment of protein localization"/>
    <property type="evidence" value="ECO:0000266"/>
    <property type="project" value="RGD"/>
</dbReference>
<dbReference type="GO" id="GO:0016321">
    <property type="term" value="P:female meiosis chromosome segregation"/>
    <property type="evidence" value="ECO:0000266"/>
    <property type="project" value="RGD"/>
</dbReference>
<dbReference type="GO" id="GO:0000086">
    <property type="term" value="P:G2/M transition of mitotic cell cycle"/>
    <property type="evidence" value="ECO:0000250"/>
    <property type="project" value="UniProtKB"/>
</dbReference>
<dbReference type="GO" id="GO:0045143">
    <property type="term" value="P:homologous chromosome segregation"/>
    <property type="evidence" value="ECO:0000266"/>
    <property type="project" value="RGD"/>
</dbReference>
<dbReference type="GO" id="GO:0001578">
    <property type="term" value="P:microtubule bundle formation"/>
    <property type="evidence" value="ECO:0000250"/>
    <property type="project" value="UniProtKB"/>
</dbReference>
<dbReference type="GO" id="GO:0000278">
    <property type="term" value="P:mitotic cell cycle"/>
    <property type="evidence" value="ECO:0000250"/>
    <property type="project" value="UniProtKB"/>
</dbReference>
<dbReference type="GO" id="GO:0000281">
    <property type="term" value="P:mitotic cytokinesis"/>
    <property type="evidence" value="ECO:0000250"/>
    <property type="project" value="UniProtKB"/>
</dbReference>
<dbReference type="GO" id="GO:0007095">
    <property type="term" value="P:mitotic G2 DNA damage checkpoint signaling"/>
    <property type="evidence" value="ECO:0000250"/>
    <property type="project" value="UniProtKB"/>
</dbReference>
<dbReference type="GO" id="GO:0000070">
    <property type="term" value="P:mitotic sister chromatid segregation"/>
    <property type="evidence" value="ECO:0000250"/>
    <property type="project" value="UniProtKB"/>
</dbReference>
<dbReference type="GO" id="GO:0007094">
    <property type="term" value="P:mitotic spindle assembly checkpoint signaling"/>
    <property type="evidence" value="ECO:0000250"/>
    <property type="project" value="UniProtKB"/>
</dbReference>
<dbReference type="GO" id="GO:0007052">
    <property type="term" value="P:mitotic spindle organization"/>
    <property type="evidence" value="ECO:0000318"/>
    <property type="project" value="GO_Central"/>
</dbReference>
<dbReference type="GO" id="GO:0043066">
    <property type="term" value="P:negative regulation of apoptotic process"/>
    <property type="evidence" value="ECO:0000250"/>
    <property type="project" value="UniProtKB"/>
</dbReference>
<dbReference type="GO" id="GO:2000042">
    <property type="term" value="P:negative regulation of double-strand break repair via homologous recombination"/>
    <property type="evidence" value="ECO:0000250"/>
    <property type="project" value="UniProtKB"/>
</dbReference>
<dbReference type="GO" id="GO:0000122">
    <property type="term" value="P:negative regulation of transcription by RNA polymerase II"/>
    <property type="evidence" value="ECO:0000250"/>
    <property type="project" value="UniProtKB"/>
</dbReference>
<dbReference type="GO" id="GO:0051081">
    <property type="term" value="P:nuclear membrane disassembly"/>
    <property type="evidence" value="ECO:0000250"/>
    <property type="project" value="UniProtKB"/>
</dbReference>
<dbReference type="GO" id="GO:0040038">
    <property type="term" value="P:polar body extrusion after meiotic divisions"/>
    <property type="evidence" value="ECO:0000315"/>
    <property type="project" value="RGD"/>
</dbReference>
<dbReference type="GO" id="GO:0032436">
    <property type="term" value="P:positive regulation of proteasomal ubiquitin-dependent protein catabolic process"/>
    <property type="evidence" value="ECO:0000250"/>
    <property type="project" value="UniProtKB"/>
</dbReference>
<dbReference type="GO" id="GO:0045862">
    <property type="term" value="P:positive regulation of proteolysis"/>
    <property type="evidence" value="ECO:0000266"/>
    <property type="project" value="RGD"/>
</dbReference>
<dbReference type="GO" id="GO:1904668">
    <property type="term" value="P:positive regulation of ubiquitin protein ligase activity"/>
    <property type="evidence" value="ECO:0000250"/>
    <property type="project" value="UniProtKB"/>
</dbReference>
<dbReference type="GO" id="GO:0051443">
    <property type="term" value="P:positive regulation of ubiquitin-protein transferase activity"/>
    <property type="evidence" value="ECO:0000250"/>
    <property type="project" value="UniProtKB"/>
</dbReference>
<dbReference type="GO" id="GO:0031648">
    <property type="term" value="P:protein destabilization"/>
    <property type="evidence" value="ECO:0000266"/>
    <property type="project" value="RGD"/>
</dbReference>
<dbReference type="GO" id="GO:0071168">
    <property type="term" value="P:protein localization to chromatin"/>
    <property type="evidence" value="ECO:0000250"/>
    <property type="project" value="UniProtKB"/>
</dbReference>
<dbReference type="GO" id="GO:0090435">
    <property type="term" value="P:protein localization to nuclear envelope"/>
    <property type="evidence" value="ECO:0000250"/>
    <property type="project" value="UniProtKB"/>
</dbReference>
<dbReference type="GO" id="GO:0033365">
    <property type="term" value="P:protein localization to organelle"/>
    <property type="evidence" value="ECO:0000266"/>
    <property type="project" value="RGD"/>
</dbReference>
<dbReference type="GO" id="GO:0006468">
    <property type="term" value="P:protein phosphorylation"/>
    <property type="evidence" value="ECO:0000316"/>
    <property type="project" value="MGI"/>
</dbReference>
<dbReference type="GO" id="GO:0016567">
    <property type="term" value="P:protein ubiquitination"/>
    <property type="evidence" value="ECO:0000266"/>
    <property type="project" value="RGD"/>
</dbReference>
<dbReference type="GO" id="GO:0032465">
    <property type="term" value="P:regulation of cytokinesis"/>
    <property type="evidence" value="ECO:0000266"/>
    <property type="project" value="RGD"/>
</dbReference>
<dbReference type="GO" id="GO:0007346">
    <property type="term" value="P:regulation of mitotic cell cycle"/>
    <property type="evidence" value="ECO:0000266"/>
    <property type="project" value="RGD"/>
</dbReference>
<dbReference type="GO" id="GO:0030071">
    <property type="term" value="P:regulation of mitotic metaphase/anaphase transition"/>
    <property type="evidence" value="ECO:0000266"/>
    <property type="project" value="RGD"/>
</dbReference>
<dbReference type="GO" id="GO:1901673">
    <property type="term" value="P:regulation of mitotic spindle assembly"/>
    <property type="evidence" value="ECO:0000266"/>
    <property type="project" value="RGD"/>
</dbReference>
<dbReference type="GO" id="GO:1904776">
    <property type="term" value="P:regulation of protein localization to cell cortex"/>
    <property type="evidence" value="ECO:0000266"/>
    <property type="project" value="RGD"/>
</dbReference>
<dbReference type="GO" id="GO:0070194">
    <property type="term" value="P:synaptonemal complex disassembly"/>
    <property type="evidence" value="ECO:0000266"/>
    <property type="project" value="RGD"/>
</dbReference>
<dbReference type="CDD" id="cd13118">
    <property type="entry name" value="POLO_box_1"/>
    <property type="match status" value="1"/>
</dbReference>
<dbReference type="CDD" id="cd13117">
    <property type="entry name" value="POLO_box_2"/>
    <property type="match status" value="1"/>
</dbReference>
<dbReference type="CDD" id="cd14187">
    <property type="entry name" value="STKc_PLK1"/>
    <property type="match status" value="1"/>
</dbReference>
<dbReference type="FunFam" id="1.10.510.10:FF:000727">
    <property type="entry name" value="Serine/threonine-protein kinase PLK"/>
    <property type="match status" value="1"/>
</dbReference>
<dbReference type="FunFam" id="3.30.1120.30:FF:000003">
    <property type="entry name" value="Serine/threonine-protein kinase PLK"/>
    <property type="match status" value="1"/>
</dbReference>
<dbReference type="FunFam" id="3.30.200.20:FF:000284">
    <property type="entry name" value="Serine/threonine-protein kinase PLK"/>
    <property type="match status" value="1"/>
</dbReference>
<dbReference type="Gene3D" id="3.30.200.20">
    <property type="entry name" value="Phosphorylase Kinase, domain 1"/>
    <property type="match status" value="1"/>
</dbReference>
<dbReference type="Gene3D" id="3.30.1120.30">
    <property type="entry name" value="POLO box domain"/>
    <property type="match status" value="2"/>
</dbReference>
<dbReference type="Gene3D" id="1.10.510.10">
    <property type="entry name" value="Transferase(Phosphotransferase) domain 1"/>
    <property type="match status" value="1"/>
</dbReference>
<dbReference type="InterPro" id="IPR011009">
    <property type="entry name" value="Kinase-like_dom_sf"/>
</dbReference>
<dbReference type="InterPro" id="IPR033702">
    <property type="entry name" value="PLK1_cat"/>
</dbReference>
<dbReference type="InterPro" id="IPR033701">
    <property type="entry name" value="POLO_box_1"/>
</dbReference>
<dbReference type="InterPro" id="IPR033695">
    <property type="entry name" value="POLO_box_2"/>
</dbReference>
<dbReference type="InterPro" id="IPR000959">
    <property type="entry name" value="POLO_box_dom"/>
</dbReference>
<dbReference type="InterPro" id="IPR036947">
    <property type="entry name" value="POLO_box_dom_sf"/>
</dbReference>
<dbReference type="InterPro" id="IPR000719">
    <property type="entry name" value="Prot_kinase_dom"/>
</dbReference>
<dbReference type="InterPro" id="IPR017441">
    <property type="entry name" value="Protein_kinase_ATP_BS"/>
</dbReference>
<dbReference type="InterPro" id="IPR008271">
    <property type="entry name" value="Ser/Thr_kinase_AS"/>
</dbReference>
<dbReference type="PANTHER" id="PTHR24345">
    <property type="entry name" value="SERINE/THREONINE-PROTEIN KINASE PLK"/>
    <property type="match status" value="1"/>
</dbReference>
<dbReference type="PANTHER" id="PTHR24345:SF93">
    <property type="entry name" value="SERINE_THREONINE-PROTEIN KINASE PLK1"/>
    <property type="match status" value="1"/>
</dbReference>
<dbReference type="Pfam" id="PF00069">
    <property type="entry name" value="Pkinase"/>
    <property type="match status" value="1"/>
</dbReference>
<dbReference type="Pfam" id="PF00659">
    <property type="entry name" value="POLO_box"/>
    <property type="match status" value="2"/>
</dbReference>
<dbReference type="SMART" id="SM00220">
    <property type="entry name" value="S_TKc"/>
    <property type="match status" value="1"/>
</dbReference>
<dbReference type="SUPFAM" id="SSF82615">
    <property type="entry name" value="Polo-box domain"/>
    <property type="match status" value="2"/>
</dbReference>
<dbReference type="SUPFAM" id="SSF56112">
    <property type="entry name" value="Protein kinase-like (PK-like)"/>
    <property type="match status" value="1"/>
</dbReference>
<dbReference type="PROSITE" id="PS50078">
    <property type="entry name" value="POLO_BOX"/>
    <property type="match status" value="2"/>
</dbReference>
<dbReference type="PROSITE" id="PS00107">
    <property type="entry name" value="PROTEIN_KINASE_ATP"/>
    <property type="match status" value="1"/>
</dbReference>
<dbReference type="PROSITE" id="PS50011">
    <property type="entry name" value="PROTEIN_KINASE_DOM"/>
    <property type="match status" value="1"/>
</dbReference>
<dbReference type="PROSITE" id="PS00108">
    <property type="entry name" value="PROTEIN_KINASE_ST"/>
    <property type="match status" value="1"/>
</dbReference>
<organism>
    <name type="scientific">Rattus norvegicus</name>
    <name type="common">Rat</name>
    <dbReference type="NCBI Taxonomy" id="10116"/>
    <lineage>
        <taxon>Eukaryota</taxon>
        <taxon>Metazoa</taxon>
        <taxon>Chordata</taxon>
        <taxon>Craniata</taxon>
        <taxon>Vertebrata</taxon>
        <taxon>Euteleostomi</taxon>
        <taxon>Mammalia</taxon>
        <taxon>Eutheria</taxon>
        <taxon>Euarchontoglires</taxon>
        <taxon>Glires</taxon>
        <taxon>Rodentia</taxon>
        <taxon>Myomorpha</taxon>
        <taxon>Muroidea</taxon>
        <taxon>Muridae</taxon>
        <taxon>Murinae</taxon>
        <taxon>Rattus</taxon>
    </lineage>
</organism>
<name>PLK1_RAT</name>
<proteinExistence type="evidence at transcript level"/>
<protein>
    <recommendedName>
        <fullName>Serine/threonine-protein kinase PLK1</fullName>
        <ecNumber evidence="3">2.7.11.21</ecNumber>
    </recommendedName>
    <alternativeName>
        <fullName>Polo-like kinase 1</fullName>
        <shortName>PLK-1</shortName>
    </alternativeName>
</protein>
<feature type="chain" id="PRO_0000086558" description="Serine/threonine-protein kinase PLK1">
    <location>
        <begin position="1"/>
        <end position="603"/>
    </location>
</feature>
<feature type="domain" description="Protein kinase" evidence="6">
    <location>
        <begin position="53"/>
        <end position="305"/>
    </location>
</feature>
<feature type="domain" description="POLO box 1" evidence="5">
    <location>
        <begin position="410"/>
        <end position="488"/>
    </location>
</feature>
<feature type="domain" description="POLO box 2" evidence="5">
    <location>
        <begin position="510"/>
        <end position="592"/>
    </location>
</feature>
<feature type="region of interest" description="Disordered" evidence="8">
    <location>
        <begin position="1"/>
        <end position="32"/>
    </location>
</feature>
<feature type="region of interest" description="Activation loop" evidence="1">
    <location>
        <begin position="194"/>
        <end position="221"/>
    </location>
</feature>
<feature type="region of interest" description="Disordered" evidence="8">
    <location>
        <begin position="338"/>
        <end position="361"/>
    </location>
</feature>
<feature type="region of interest" description="Linker" evidence="1">
    <location>
        <begin position="493"/>
        <end position="507"/>
    </location>
</feature>
<feature type="region of interest" description="Important for interaction with phosphorylated proteins" evidence="1">
    <location>
        <begin position="538"/>
        <end position="540"/>
    </location>
</feature>
<feature type="short sequence motif" description="D-box that targets the protein for proteasomal degradation in anaphase" evidence="1">
    <location>
        <begin position="337"/>
        <end position="340"/>
    </location>
</feature>
<feature type="compositionally biased region" description="Low complexity" evidence="8">
    <location>
        <begin position="1"/>
        <end position="15"/>
    </location>
</feature>
<feature type="compositionally biased region" description="Basic and acidic residues" evidence="8">
    <location>
        <begin position="351"/>
        <end position="361"/>
    </location>
</feature>
<feature type="active site" description="Proton acceptor" evidence="6 7">
    <location>
        <position position="176"/>
    </location>
</feature>
<feature type="binding site" evidence="6">
    <location>
        <begin position="59"/>
        <end position="67"/>
    </location>
    <ligand>
        <name>ATP</name>
        <dbReference type="ChEBI" id="CHEBI:30616"/>
    </ligand>
</feature>
<feature type="binding site" evidence="6">
    <location>
        <position position="82"/>
    </location>
    <ligand>
        <name>ATP</name>
        <dbReference type="ChEBI" id="CHEBI:30616"/>
    </ligand>
</feature>
<feature type="binding site" evidence="6">
    <location>
        <position position="131"/>
    </location>
    <ligand>
        <name>ATP</name>
        <dbReference type="ChEBI" id="CHEBI:30616"/>
    </ligand>
</feature>
<feature type="binding site" evidence="6">
    <location>
        <begin position="178"/>
        <end position="181"/>
    </location>
    <ligand>
        <name>ATP</name>
        <dbReference type="ChEBI" id="CHEBI:30616"/>
    </ligand>
</feature>
<feature type="binding site" evidence="6">
    <location>
        <position position="194"/>
    </location>
    <ligand>
        <name>ATP</name>
        <dbReference type="ChEBI" id="CHEBI:30616"/>
    </ligand>
</feature>
<feature type="modified residue" description="Phosphoserine" evidence="3">
    <location>
        <position position="103"/>
    </location>
</feature>
<feature type="modified residue" description="Phosphoserine" evidence="3">
    <location>
        <position position="137"/>
    </location>
</feature>
<feature type="modified residue" description="Phosphothreonine; by AURKA" evidence="3">
    <location>
        <position position="210"/>
    </location>
</feature>
<feature type="modified residue" description="Phosphothreonine" evidence="3">
    <location>
        <position position="214"/>
    </location>
</feature>
<feature type="modified residue" description="Phosphoserine; by autocatalysis" evidence="1">
    <location>
        <position position="269"/>
    </location>
</feature>
<feature type="modified residue" description="Phosphoserine; by autocatalysis" evidence="3">
    <location>
        <position position="335"/>
    </location>
</feature>
<feature type="modified residue" description="Phosphoserine" evidence="3">
    <location>
        <position position="375"/>
    </location>
</feature>
<feature type="modified residue" description="Phosphoserine" evidence="3">
    <location>
        <position position="450"/>
    </location>
</feature>
<feature type="modified residue" description="Phosphothreonine" evidence="3">
    <location>
        <position position="498"/>
    </location>
</feature>
<feature type="cross-link" description="Glycyl lysine isopeptide (Lys-Gly) (interchain with G-Cter in ubiquitin)" evidence="3">
    <location>
        <position position="19"/>
    </location>
</feature>
<feature type="cross-link" description="Glycyl lysine isopeptide (Lys-Gly) (interchain with G-Cter in SUMO2)" evidence="3">
    <location>
        <position position="338"/>
    </location>
</feature>
<feature type="cross-link" description="Glycyl lysine isopeptide (Lys-Gly) (interchain with G-Cter in ubiquitin)" evidence="3">
    <location>
        <position position="492"/>
    </location>
</feature>
<feature type="sequence conflict" description="In Ref. 1; AAA18885." evidence="9" ref="1">
    <original>A</original>
    <variation>V</variation>
    <location>
        <position position="27"/>
    </location>
</feature>
<feature type="sequence conflict" description="In Ref. 1; AAA18885." evidence="9" ref="1">
    <original>G</original>
    <variation>V</variation>
    <location>
        <position position="32"/>
    </location>
</feature>
<feature type="sequence conflict" description="In Ref. 1; AAA18885." evidence="9" ref="1">
    <original>M</original>
    <variation>V</variation>
    <location>
        <position position="45"/>
    </location>
</feature>
<feature type="sequence conflict" description="In Ref. 1; AAA18885." evidence="9" ref="1">
    <original>R</original>
    <variation>Q</variation>
    <location>
        <position position="51"/>
    </location>
</feature>
<feature type="sequence conflict" description="In Ref. 2; AAH83926." evidence="9" ref="2">
    <original>P</original>
    <variation>A</variation>
    <location>
        <position position="80"/>
    </location>
</feature>
<feature type="sequence conflict" description="In Ref. 1; AAA18885." evidence="9" ref="1">
    <original>I</original>
    <variation>T</variation>
    <location>
        <position position="102"/>
    </location>
</feature>
<feature type="sequence conflict" description="In Ref. 1; AAA18885." evidence="9" ref="1">
    <original>A</original>
    <variation>E</variation>
    <location>
        <position position="109"/>
    </location>
</feature>
<feature type="sequence conflict" description="In Ref. 1; AAA18885." evidence="9" ref="1">
    <original>T</original>
    <variation>A</variation>
    <location>
        <position position="291"/>
    </location>
</feature>
<feature type="sequence conflict" description="In Ref. 1; AAA18885." evidence="9" ref="1">
    <original>LC</original>
    <variation>RG</variation>
    <location>
        <begin position="543"/>
        <end position="544"/>
    </location>
</feature>